<comment type="function">
    <text evidence="1">Specifically methylates the guanine in position 1207 of 16S rRNA in the 30S particle.</text>
</comment>
<comment type="catalytic activity">
    <reaction evidence="1">
        <text>guanosine(1207) in 16S rRNA + S-adenosyl-L-methionine = N(2)-methylguanosine(1207) in 16S rRNA + S-adenosyl-L-homocysteine + H(+)</text>
        <dbReference type="Rhea" id="RHEA:42736"/>
        <dbReference type="Rhea" id="RHEA-COMP:10213"/>
        <dbReference type="Rhea" id="RHEA-COMP:10214"/>
        <dbReference type="ChEBI" id="CHEBI:15378"/>
        <dbReference type="ChEBI" id="CHEBI:57856"/>
        <dbReference type="ChEBI" id="CHEBI:59789"/>
        <dbReference type="ChEBI" id="CHEBI:74269"/>
        <dbReference type="ChEBI" id="CHEBI:74481"/>
        <dbReference type="EC" id="2.1.1.172"/>
    </reaction>
</comment>
<comment type="subunit">
    <text evidence="1">Monomer.</text>
</comment>
<comment type="subcellular location">
    <subcellularLocation>
        <location evidence="1">Cytoplasm</location>
    </subcellularLocation>
</comment>
<comment type="similarity">
    <text evidence="1">Belongs to the methyltransferase superfamily. RsmC family.</text>
</comment>
<name>RSMC_ECO57</name>
<proteinExistence type="inferred from homology"/>
<organism>
    <name type="scientific">Escherichia coli O157:H7</name>
    <dbReference type="NCBI Taxonomy" id="83334"/>
    <lineage>
        <taxon>Bacteria</taxon>
        <taxon>Pseudomonadati</taxon>
        <taxon>Pseudomonadota</taxon>
        <taxon>Gammaproteobacteria</taxon>
        <taxon>Enterobacterales</taxon>
        <taxon>Enterobacteriaceae</taxon>
        <taxon>Escherichia</taxon>
    </lineage>
</organism>
<feature type="chain" id="PRO_0000369705" description="Ribosomal RNA small subunit methyltransferase C">
    <location>
        <begin position="1"/>
        <end position="343"/>
    </location>
</feature>
<protein>
    <recommendedName>
        <fullName evidence="1">Ribosomal RNA small subunit methyltransferase C</fullName>
        <ecNumber evidence="1">2.1.1.172</ecNumber>
    </recommendedName>
    <alternativeName>
        <fullName evidence="1">16S rRNA m2G1207 methyltransferase</fullName>
    </alternativeName>
    <alternativeName>
        <fullName evidence="1">rRNA (guanine-N(2)-)-methyltransferase RsmC</fullName>
    </alternativeName>
</protein>
<accession>Q8X510</accession>
<accession>Q7A8I9</accession>
<dbReference type="EC" id="2.1.1.172" evidence="1"/>
<dbReference type="EMBL" id="AE005174">
    <property type="protein sequence ID" value="AAG59551.1"/>
    <property type="molecule type" value="Genomic_DNA"/>
</dbReference>
<dbReference type="EMBL" id="BA000007">
    <property type="protein sequence ID" value="BAB38752.1"/>
    <property type="molecule type" value="Genomic_DNA"/>
</dbReference>
<dbReference type="PIR" id="A98295">
    <property type="entry name" value="A98295"/>
</dbReference>
<dbReference type="PIR" id="C86136">
    <property type="entry name" value="C86136"/>
</dbReference>
<dbReference type="RefSeq" id="NP_313356.1">
    <property type="nucleotide sequence ID" value="NC_002695.1"/>
</dbReference>
<dbReference type="RefSeq" id="WP_001272349.1">
    <property type="nucleotide sequence ID" value="NZ_VOAI01000002.1"/>
</dbReference>
<dbReference type="SMR" id="Q8X510"/>
<dbReference type="STRING" id="155864.Z5972"/>
<dbReference type="GeneID" id="913556"/>
<dbReference type="KEGG" id="ece:Z5972"/>
<dbReference type="KEGG" id="ecs:ECs_5329"/>
<dbReference type="PATRIC" id="fig|386585.9.peg.5573"/>
<dbReference type="eggNOG" id="COG2813">
    <property type="taxonomic scope" value="Bacteria"/>
</dbReference>
<dbReference type="HOGENOM" id="CLU_049581_0_1_6"/>
<dbReference type="OMA" id="RHCQLWQ"/>
<dbReference type="Proteomes" id="UP000000558">
    <property type="component" value="Chromosome"/>
</dbReference>
<dbReference type="Proteomes" id="UP000002519">
    <property type="component" value="Chromosome"/>
</dbReference>
<dbReference type="GO" id="GO:0005737">
    <property type="term" value="C:cytoplasm"/>
    <property type="evidence" value="ECO:0007669"/>
    <property type="project" value="UniProtKB-SubCell"/>
</dbReference>
<dbReference type="GO" id="GO:0052914">
    <property type="term" value="F:16S rRNA (guanine(1207)-N(2))-methyltransferase activity"/>
    <property type="evidence" value="ECO:0007669"/>
    <property type="project" value="UniProtKB-EC"/>
</dbReference>
<dbReference type="GO" id="GO:0003676">
    <property type="term" value="F:nucleic acid binding"/>
    <property type="evidence" value="ECO:0007669"/>
    <property type="project" value="InterPro"/>
</dbReference>
<dbReference type="CDD" id="cd02440">
    <property type="entry name" value="AdoMet_MTases"/>
    <property type="match status" value="1"/>
</dbReference>
<dbReference type="FunFam" id="3.40.50.150:FF:000058">
    <property type="entry name" value="Ribosomal RNA small subunit methyltransferase C"/>
    <property type="match status" value="1"/>
</dbReference>
<dbReference type="FunFam" id="3.40.50.150:FF:000063">
    <property type="entry name" value="Ribosomal RNA small subunit methyltransferase C"/>
    <property type="match status" value="1"/>
</dbReference>
<dbReference type="Gene3D" id="3.40.50.150">
    <property type="entry name" value="Vaccinia Virus protein VP39"/>
    <property type="match status" value="2"/>
</dbReference>
<dbReference type="HAMAP" id="MF_01862">
    <property type="entry name" value="16SrRNA_methyltr_C"/>
    <property type="match status" value="1"/>
</dbReference>
<dbReference type="InterPro" id="IPR002052">
    <property type="entry name" value="DNA_methylase_N6_adenine_CS"/>
</dbReference>
<dbReference type="InterPro" id="IPR013675">
    <property type="entry name" value="Mtase_sm_N"/>
</dbReference>
<dbReference type="InterPro" id="IPR023543">
    <property type="entry name" value="rRNA_ssu_MeTfrase_C"/>
</dbReference>
<dbReference type="InterPro" id="IPR046977">
    <property type="entry name" value="RsmC/RlmG"/>
</dbReference>
<dbReference type="InterPro" id="IPR029063">
    <property type="entry name" value="SAM-dependent_MTases_sf"/>
</dbReference>
<dbReference type="InterPro" id="IPR007848">
    <property type="entry name" value="Small_mtfrase_dom"/>
</dbReference>
<dbReference type="NCBIfam" id="NF007023">
    <property type="entry name" value="PRK09489.1"/>
    <property type="match status" value="1"/>
</dbReference>
<dbReference type="PANTHER" id="PTHR47816">
    <property type="entry name" value="RIBOSOMAL RNA SMALL SUBUNIT METHYLTRANSFERASE C"/>
    <property type="match status" value="1"/>
</dbReference>
<dbReference type="PANTHER" id="PTHR47816:SF4">
    <property type="entry name" value="RIBOSOMAL RNA SMALL SUBUNIT METHYLTRANSFERASE C"/>
    <property type="match status" value="1"/>
</dbReference>
<dbReference type="Pfam" id="PF05175">
    <property type="entry name" value="MTS"/>
    <property type="match status" value="1"/>
</dbReference>
<dbReference type="Pfam" id="PF08468">
    <property type="entry name" value="MTS_N"/>
    <property type="match status" value="1"/>
</dbReference>
<dbReference type="SUPFAM" id="SSF53335">
    <property type="entry name" value="S-adenosyl-L-methionine-dependent methyltransferases"/>
    <property type="match status" value="1"/>
</dbReference>
<evidence type="ECO:0000255" key="1">
    <source>
        <dbReference type="HAMAP-Rule" id="MF_01862"/>
    </source>
</evidence>
<sequence length="343" mass="37602">MSAFTPASEVLLRHSDDFEQSRILFAGDLQDDLPARLDTAASRAHTQQFQHWQVLSRQMGDNARFSLVATADDVADCDTLIYYWPKNKPEAQFQLMNLLSLLPVGTDIFVVGENRSGVRSAEQMLADYAPLNKVDSARRCGLYFGRLEKQPVFDADKFWGEYSVDGLTVKTLPGVFSRDGLDVGSQLLLSTLTPHTKGKVLDVGCGAGVLSVAFARHSPKIRLTLCDVSAPAVEASRATLAANGVEGEVFASNVFSEVKGRFDMIISNPPFHDGMQTSLDAAQTLIRGAVRHLNSGGELRIVANAFLPYPDVLDETFGFHEVIAQTGRFKVYRAIMTRQAKKG</sequence>
<keyword id="KW-0963">Cytoplasm</keyword>
<keyword id="KW-0489">Methyltransferase</keyword>
<keyword id="KW-1185">Reference proteome</keyword>
<keyword id="KW-0698">rRNA processing</keyword>
<keyword id="KW-0949">S-adenosyl-L-methionine</keyword>
<keyword id="KW-0808">Transferase</keyword>
<gene>
    <name evidence="1" type="primary">rsmC</name>
    <name type="ordered locus">Z5972</name>
    <name type="ordered locus">ECs5329</name>
</gene>
<reference key="1">
    <citation type="journal article" date="2001" name="Nature">
        <title>Genome sequence of enterohaemorrhagic Escherichia coli O157:H7.</title>
        <authorList>
            <person name="Perna N.T."/>
            <person name="Plunkett G. III"/>
            <person name="Burland V."/>
            <person name="Mau B."/>
            <person name="Glasner J.D."/>
            <person name="Rose D.J."/>
            <person name="Mayhew G.F."/>
            <person name="Evans P.S."/>
            <person name="Gregor J."/>
            <person name="Kirkpatrick H.A."/>
            <person name="Posfai G."/>
            <person name="Hackett J."/>
            <person name="Klink S."/>
            <person name="Boutin A."/>
            <person name="Shao Y."/>
            <person name="Miller L."/>
            <person name="Grotbeck E.J."/>
            <person name="Davis N.W."/>
            <person name="Lim A."/>
            <person name="Dimalanta E.T."/>
            <person name="Potamousis K."/>
            <person name="Apodaca J."/>
            <person name="Anantharaman T.S."/>
            <person name="Lin J."/>
            <person name="Yen G."/>
            <person name="Schwartz D.C."/>
            <person name="Welch R.A."/>
            <person name="Blattner F.R."/>
        </authorList>
    </citation>
    <scope>NUCLEOTIDE SEQUENCE [LARGE SCALE GENOMIC DNA]</scope>
    <source>
        <strain>O157:H7 / EDL933 / ATCC 700927 / EHEC</strain>
    </source>
</reference>
<reference key="2">
    <citation type="journal article" date="2001" name="DNA Res.">
        <title>Complete genome sequence of enterohemorrhagic Escherichia coli O157:H7 and genomic comparison with a laboratory strain K-12.</title>
        <authorList>
            <person name="Hayashi T."/>
            <person name="Makino K."/>
            <person name="Ohnishi M."/>
            <person name="Kurokawa K."/>
            <person name="Ishii K."/>
            <person name="Yokoyama K."/>
            <person name="Han C.-G."/>
            <person name="Ohtsubo E."/>
            <person name="Nakayama K."/>
            <person name="Murata T."/>
            <person name="Tanaka M."/>
            <person name="Tobe T."/>
            <person name="Iida T."/>
            <person name="Takami H."/>
            <person name="Honda T."/>
            <person name="Sasakawa C."/>
            <person name="Ogasawara N."/>
            <person name="Yasunaga T."/>
            <person name="Kuhara S."/>
            <person name="Shiba T."/>
            <person name="Hattori M."/>
            <person name="Shinagawa H."/>
        </authorList>
    </citation>
    <scope>NUCLEOTIDE SEQUENCE [LARGE SCALE GENOMIC DNA]</scope>
    <source>
        <strain>O157:H7 / Sakai / RIMD 0509952 / EHEC</strain>
    </source>
</reference>